<proteinExistence type="inferred from homology"/>
<accession>A2C236</accession>
<sequence length="310" mass="33430">MSDTNNHSKNIIHRILTEQINLTSNELDTKSTKEIVNIFSEADKEPQKAVERVIPELINAIDEITARLKSKGRLFYIGAGTSGRLGVLDASECPPTFCSNPDLVQGIIAGGIPSLTRSSEHLEDVSEIAIADLKDRNFSYRDVLIGITASGRTPYVIAALNYSKSISALSISISSVPESDSTLDNDIDIRLITGPEILAGSTRLKAGTATKMALNIISTSVMIKLGKVYGNRMIDLSVSNDKLLDRAIGILFDIGSVDKDTAVRLLKKTNGSVKLSLLIALSGMDVIDAKQLLNDSKGNLRTALISFKDN</sequence>
<name>MURQ_PROM1</name>
<comment type="function">
    <text evidence="1">Specifically catalyzes the cleavage of the D-lactyl ether substituent of MurNAc 6-phosphate, producing GlcNAc 6-phosphate and D-lactate.</text>
</comment>
<comment type="catalytic activity">
    <reaction evidence="1">
        <text>N-acetyl-D-muramate 6-phosphate + H2O = N-acetyl-D-glucosamine 6-phosphate + (R)-lactate</text>
        <dbReference type="Rhea" id="RHEA:26410"/>
        <dbReference type="ChEBI" id="CHEBI:15377"/>
        <dbReference type="ChEBI" id="CHEBI:16004"/>
        <dbReference type="ChEBI" id="CHEBI:57513"/>
        <dbReference type="ChEBI" id="CHEBI:58722"/>
        <dbReference type="EC" id="4.2.1.126"/>
    </reaction>
</comment>
<comment type="pathway">
    <text evidence="1">Amino-sugar metabolism; N-acetylmuramate degradation.</text>
</comment>
<comment type="subunit">
    <text evidence="1">Homodimer.</text>
</comment>
<comment type="miscellaneous">
    <text evidence="1">A lyase-type mechanism (elimination/hydration) is suggested for the cleavage of the lactyl ether bond of MurNAc 6-phosphate, with the formation of an alpha,beta-unsaturated aldehyde intermediate with (E)-stereochemistry, followed by the syn addition of water to give product.</text>
</comment>
<comment type="similarity">
    <text evidence="1">Belongs to the GCKR-like family. MurNAc-6-P etherase subfamily.</text>
</comment>
<protein>
    <recommendedName>
        <fullName evidence="1">N-acetylmuramic acid 6-phosphate etherase</fullName>
        <shortName evidence="1">MurNAc-6-P etherase</shortName>
        <ecNumber evidence="1">4.2.1.126</ecNumber>
    </recommendedName>
    <alternativeName>
        <fullName evidence="1">N-acetylmuramic acid 6-phosphate hydrolase</fullName>
    </alternativeName>
    <alternativeName>
        <fullName evidence="1">N-acetylmuramic acid 6-phosphate lyase</fullName>
    </alternativeName>
</protein>
<evidence type="ECO:0000255" key="1">
    <source>
        <dbReference type="HAMAP-Rule" id="MF_00068"/>
    </source>
</evidence>
<gene>
    <name evidence="1" type="primary">murQ</name>
    <name type="ordered locus">NATL1_09881</name>
</gene>
<organism>
    <name type="scientific">Prochlorococcus marinus (strain NATL1A)</name>
    <dbReference type="NCBI Taxonomy" id="167555"/>
    <lineage>
        <taxon>Bacteria</taxon>
        <taxon>Bacillati</taxon>
        <taxon>Cyanobacteriota</taxon>
        <taxon>Cyanophyceae</taxon>
        <taxon>Synechococcales</taxon>
        <taxon>Prochlorococcaceae</taxon>
        <taxon>Prochlorococcus</taxon>
    </lineage>
</organism>
<keyword id="KW-0119">Carbohydrate metabolism</keyword>
<keyword id="KW-0456">Lyase</keyword>
<dbReference type="EC" id="4.2.1.126" evidence="1"/>
<dbReference type="EMBL" id="CP000553">
    <property type="protein sequence ID" value="ABM75546.1"/>
    <property type="molecule type" value="Genomic_DNA"/>
</dbReference>
<dbReference type="RefSeq" id="WP_011823672.1">
    <property type="nucleotide sequence ID" value="NC_008819.1"/>
</dbReference>
<dbReference type="SMR" id="A2C236"/>
<dbReference type="KEGG" id="pme:NATL1_09881"/>
<dbReference type="eggNOG" id="COG2103">
    <property type="taxonomic scope" value="Bacteria"/>
</dbReference>
<dbReference type="HOGENOM" id="CLU_049049_1_1_3"/>
<dbReference type="UniPathway" id="UPA00342"/>
<dbReference type="Proteomes" id="UP000002592">
    <property type="component" value="Chromosome"/>
</dbReference>
<dbReference type="GO" id="GO:0097367">
    <property type="term" value="F:carbohydrate derivative binding"/>
    <property type="evidence" value="ECO:0007669"/>
    <property type="project" value="InterPro"/>
</dbReference>
<dbReference type="GO" id="GO:0016835">
    <property type="term" value="F:carbon-oxygen lyase activity"/>
    <property type="evidence" value="ECO:0007669"/>
    <property type="project" value="UniProtKB-UniRule"/>
</dbReference>
<dbReference type="GO" id="GO:0016803">
    <property type="term" value="F:ether hydrolase activity"/>
    <property type="evidence" value="ECO:0007669"/>
    <property type="project" value="TreeGrafter"/>
</dbReference>
<dbReference type="GO" id="GO:0046348">
    <property type="term" value="P:amino sugar catabolic process"/>
    <property type="evidence" value="ECO:0007669"/>
    <property type="project" value="InterPro"/>
</dbReference>
<dbReference type="GO" id="GO:0097173">
    <property type="term" value="P:N-acetylmuramic acid catabolic process"/>
    <property type="evidence" value="ECO:0007669"/>
    <property type="project" value="UniProtKB-UniPathway"/>
</dbReference>
<dbReference type="GO" id="GO:0009254">
    <property type="term" value="P:peptidoglycan turnover"/>
    <property type="evidence" value="ECO:0007669"/>
    <property type="project" value="TreeGrafter"/>
</dbReference>
<dbReference type="CDD" id="cd05007">
    <property type="entry name" value="SIS_Etherase"/>
    <property type="match status" value="1"/>
</dbReference>
<dbReference type="FunFam" id="3.40.50.10490:FF:000014">
    <property type="entry name" value="N-acetylmuramic acid 6-phosphate etherase"/>
    <property type="match status" value="1"/>
</dbReference>
<dbReference type="Gene3D" id="1.10.8.1080">
    <property type="match status" value="1"/>
</dbReference>
<dbReference type="Gene3D" id="3.40.50.10490">
    <property type="entry name" value="Glucose-6-phosphate isomerase like protein, domain 1"/>
    <property type="match status" value="1"/>
</dbReference>
<dbReference type="HAMAP" id="MF_00068">
    <property type="entry name" value="MurQ"/>
    <property type="match status" value="1"/>
</dbReference>
<dbReference type="InterPro" id="IPR005488">
    <property type="entry name" value="Etherase_MurQ"/>
</dbReference>
<dbReference type="InterPro" id="IPR005486">
    <property type="entry name" value="Glucokinase_regulatory_CS"/>
</dbReference>
<dbReference type="InterPro" id="IPR040190">
    <property type="entry name" value="MURQ/GCKR"/>
</dbReference>
<dbReference type="InterPro" id="IPR001347">
    <property type="entry name" value="SIS_dom"/>
</dbReference>
<dbReference type="InterPro" id="IPR046348">
    <property type="entry name" value="SIS_dom_sf"/>
</dbReference>
<dbReference type="NCBIfam" id="TIGR00274">
    <property type="entry name" value="N-acetylmuramic acid 6-phosphate etherase"/>
    <property type="match status" value="1"/>
</dbReference>
<dbReference type="NCBIfam" id="NF003915">
    <property type="entry name" value="PRK05441.1"/>
    <property type="match status" value="1"/>
</dbReference>
<dbReference type="NCBIfam" id="NF009222">
    <property type="entry name" value="PRK12570.1"/>
    <property type="match status" value="1"/>
</dbReference>
<dbReference type="PANTHER" id="PTHR10088">
    <property type="entry name" value="GLUCOKINASE REGULATORY PROTEIN"/>
    <property type="match status" value="1"/>
</dbReference>
<dbReference type="PANTHER" id="PTHR10088:SF4">
    <property type="entry name" value="GLUCOKINASE REGULATORY PROTEIN"/>
    <property type="match status" value="1"/>
</dbReference>
<dbReference type="Pfam" id="PF20741">
    <property type="entry name" value="GKRP-like_C"/>
    <property type="match status" value="1"/>
</dbReference>
<dbReference type="Pfam" id="PF22645">
    <property type="entry name" value="GKRP_SIS_N"/>
    <property type="match status" value="1"/>
</dbReference>
<dbReference type="SUPFAM" id="SSF53697">
    <property type="entry name" value="SIS domain"/>
    <property type="match status" value="1"/>
</dbReference>
<dbReference type="PROSITE" id="PS01272">
    <property type="entry name" value="GCKR"/>
    <property type="match status" value="1"/>
</dbReference>
<dbReference type="PROSITE" id="PS51464">
    <property type="entry name" value="SIS"/>
    <property type="match status" value="1"/>
</dbReference>
<reference key="1">
    <citation type="journal article" date="2007" name="PLoS Genet.">
        <title>Patterns and implications of gene gain and loss in the evolution of Prochlorococcus.</title>
        <authorList>
            <person name="Kettler G.C."/>
            <person name="Martiny A.C."/>
            <person name="Huang K."/>
            <person name="Zucker J."/>
            <person name="Coleman M.L."/>
            <person name="Rodrigue S."/>
            <person name="Chen F."/>
            <person name="Lapidus A."/>
            <person name="Ferriera S."/>
            <person name="Johnson J."/>
            <person name="Steglich C."/>
            <person name="Church G.M."/>
            <person name="Richardson P."/>
            <person name="Chisholm S.W."/>
        </authorList>
    </citation>
    <scope>NUCLEOTIDE SEQUENCE [LARGE SCALE GENOMIC DNA]</scope>
    <source>
        <strain>NATL1A</strain>
    </source>
</reference>
<feature type="chain" id="PRO_1000009128" description="N-acetylmuramic acid 6-phosphate etherase">
    <location>
        <begin position="1"/>
        <end position="310"/>
    </location>
</feature>
<feature type="domain" description="SIS" evidence="1">
    <location>
        <begin position="64"/>
        <end position="227"/>
    </location>
</feature>
<feature type="active site" description="Proton donor" evidence="1">
    <location>
        <position position="92"/>
    </location>
</feature>
<feature type="active site" evidence="1">
    <location>
        <position position="123"/>
    </location>
</feature>